<sequence>MSLTRLLIRDFRNIETADLALSPGFNFLVGANGSGKTSVLEAIYTLGHGRAFRSLQIGRVIRHEQEAFVLHGRLQGEERETAIGLTKDKQGDSKVRIDGTDGHKVAELAHLMPMQLITPEGFTLLNGGPKYRRAFLDWGCFHNEPGFFTAWSNLKRLLKQRNAALRQVTRYEQLRPWDKELIPLAEQISTWRAEYSAGIAADMADTCKQFLPEFSLTFSFQRGWEKETEYAEVLERNFERDRQLTYTAHGPHKADLRIRADGAPVEDTLSRGQLKLLMCALRLAQGEFLTRESGRRCLYLIDDFASELDDERRGLLASRLKATQSQVFVSAISAEHVIDMSDENSKMFTVEKGKITD</sequence>
<proteinExistence type="evidence at protein level"/>
<organism>
    <name type="scientific">Escherichia coli (strain K12)</name>
    <dbReference type="NCBI Taxonomy" id="83333"/>
    <lineage>
        <taxon>Bacteria</taxon>
        <taxon>Pseudomonadati</taxon>
        <taxon>Pseudomonadota</taxon>
        <taxon>Gammaproteobacteria</taxon>
        <taxon>Enterobacterales</taxon>
        <taxon>Enterobacteriaceae</taxon>
        <taxon>Escherichia</taxon>
    </lineage>
</organism>
<gene>
    <name type="primary">recF</name>
    <name type="synonym">uvrF</name>
    <name type="ordered locus">b3700</name>
    <name type="ordered locus">JW3677</name>
</gene>
<keyword id="KW-0067">ATP-binding</keyword>
<keyword id="KW-0963">Cytoplasm</keyword>
<keyword id="KW-0903">Direct protein sequencing</keyword>
<keyword id="KW-0227">DNA damage</keyword>
<keyword id="KW-0234">DNA repair</keyword>
<keyword id="KW-0235">DNA replication</keyword>
<keyword id="KW-0238">DNA-binding</keyword>
<keyword id="KW-0547">Nucleotide-binding</keyword>
<keyword id="KW-1185">Reference proteome</keyword>
<keyword id="KW-0742">SOS response</keyword>
<reference key="1">
    <citation type="journal article" date="1984" name="Proc. Natl. Acad. Sci. U.S.A.">
        <title>Molecular analysis of the recF gene of Escherichia coli.</title>
        <authorList>
            <person name="Blanar M.A."/>
            <person name="Sandler S.J."/>
            <person name="Armengod M.-E."/>
            <person name="Ream L.W."/>
            <person name="Clark A.J."/>
        </authorList>
    </citation>
    <scope>NUCLEOTIDE SEQUENCE [GENOMIC DNA]</scope>
</reference>
<reference key="2">
    <citation type="journal article" date="1984" name="Nucleic Acids Res.">
        <title>DNA sequence and transcription of the region upstream of the E. coli gyrB gene.</title>
        <authorList>
            <person name="Adachi T."/>
            <person name="Mizuuchi K."/>
            <person name="Menzel R."/>
            <person name="Gellert M."/>
        </authorList>
    </citation>
    <scope>NUCLEOTIDE SEQUENCE [GENOMIC DNA]</scope>
    <source>
        <strain>K12</strain>
    </source>
</reference>
<reference key="3">
    <citation type="journal article" date="1993" name="Genomics">
        <title>DNA sequence and analysis of 136 kilobases of the Escherichia coli genome: organizational symmetry around the origin of replication.</title>
        <authorList>
            <person name="Burland V.D."/>
            <person name="Plunkett G. III"/>
            <person name="Daniels D.L."/>
            <person name="Blattner F.R."/>
        </authorList>
    </citation>
    <scope>NUCLEOTIDE SEQUENCE [LARGE SCALE GENOMIC DNA]</scope>
    <source>
        <strain>K12 / MG1655 / ATCC 47076</strain>
    </source>
</reference>
<reference key="4">
    <citation type="journal article" date="1997" name="Science">
        <title>The complete genome sequence of Escherichia coli K-12.</title>
        <authorList>
            <person name="Blattner F.R."/>
            <person name="Plunkett G. III"/>
            <person name="Bloch C.A."/>
            <person name="Perna N.T."/>
            <person name="Burland V."/>
            <person name="Riley M."/>
            <person name="Collado-Vides J."/>
            <person name="Glasner J.D."/>
            <person name="Rode C.K."/>
            <person name="Mayhew G.F."/>
            <person name="Gregor J."/>
            <person name="Davis N.W."/>
            <person name="Kirkpatrick H.A."/>
            <person name="Goeden M.A."/>
            <person name="Rose D.J."/>
            <person name="Mau B."/>
            <person name="Shao Y."/>
        </authorList>
    </citation>
    <scope>NUCLEOTIDE SEQUENCE [LARGE SCALE GENOMIC DNA]</scope>
    <source>
        <strain>K12 / MG1655 / ATCC 47076</strain>
    </source>
</reference>
<reference key="5">
    <citation type="journal article" date="2006" name="Mol. Syst. Biol.">
        <title>Highly accurate genome sequences of Escherichia coli K-12 strains MG1655 and W3110.</title>
        <authorList>
            <person name="Hayashi K."/>
            <person name="Morooka N."/>
            <person name="Yamamoto Y."/>
            <person name="Fujita K."/>
            <person name="Isono K."/>
            <person name="Choi S."/>
            <person name="Ohtsubo E."/>
            <person name="Baba T."/>
            <person name="Wanner B.L."/>
            <person name="Mori H."/>
            <person name="Horiuchi T."/>
        </authorList>
    </citation>
    <scope>NUCLEOTIDE SEQUENCE [LARGE SCALE GENOMIC DNA]</scope>
    <source>
        <strain>K12 / W3110 / ATCC 27325 / DSM 5911</strain>
    </source>
</reference>
<reference key="6">
    <citation type="journal article" date="1990" name="J. Bacteriol.">
        <title>Purification and preliminary characterization of the Escherichia coli K-12 recF protein.</title>
        <authorList>
            <person name="Griffin T.J. IV"/>
            <person name="Kolodner R.D."/>
        </authorList>
    </citation>
    <scope>PROTEIN SEQUENCE OF 2-13</scope>
    <scope>DNA-BINDING</scope>
</reference>
<reference key="7">
    <citation type="journal article" date="1992" name="Nucleic Acids Res.">
        <title>Sequence and complementation analysis of recF genes from Escherichia coli, Salmonella typhimurium, Pseudomonas putida and Bacillus subtilis: evidence for an essential phosphate binding loop.</title>
        <authorList>
            <person name="Sandler S.J."/>
            <person name="Chackerian B."/>
            <person name="Li J.T."/>
            <person name="Clark A.J."/>
        </authorList>
    </citation>
    <scope>MUTAGENESIS OF LYS-36</scope>
</reference>
<reference key="8">
    <citation type="journal article" date="2012" name="J. Bacteriol.">
        <title>Cellular characterization of the primosome and rep helicase in processing and restoration of replication following arrest by UV-induced DNA damage in Escherichia coli.</title>
        <authorList>
            <person name="Courcelle C.T."/>
            <person name="Landstrom A.J."/>
            <person name="Anderson B."/>
            <person name="Courcelle J."/>
        </authorList>
    </citation>
    <scope>DISRUPTION PHENOTYPE</scope>
    <source>
        <strain>K12 / W3110 / SR108</strain>
    </source>
</reference>
<name>RECF_ECOLI</name>
<dbReference type="EMBL" id="K02179">
    <property type="protein sequence ID" value="AAA24511.1"/>
    <property type="molecule type" value="Genomic_DNA"/>
</dbReference>
<dbReference type="EMBL" id="X04341">
    <property type="protein sequence ID" value="CAA27870.1"/>
    <property type="molecule type" value="Genomic_DNA"/>
</dbReference>
<dbReference type="EMBL" id="L10328">
    <property type="protein sequence ID" value="AAA62051.1"/>
    <property type="molecule type" value="Genomic_DNA"/>
</dbReference>
<dbReference type="EMBL" id="U00096">
    <property type="protein sequence ID" value="AAC76723.1"/>
    <property type="molecule type" value="Genomic_DNA"/>
</dbReference>
<dbReference type="EMBL" id="AP009048">
    <property type="protein sequence ID" value="BAE77594.1"/>
    <property type="molecule type" value="Genomic_DNA"/>
</dbReference>
<dbReference type="PIR" id="A03547">
    <property type="entry name" value="RQECF"/>
</dbReference>
<dbReference type="RefSeq" id="NP_418155.1">
    <property type="nucleotide sequence ID" value="NC_000913.3"/>
</dbReference>
<dbReference type="RefSeq" id="WP_000060112.1">
    <property type="nucleotide sequence ID" value="NZ_STEB01000015.1"/>
</dbReference>
<dbReference type="SMR" id="P0A7H0"/>
<dbReference type="BioGRID" id="4261540">
    <property type="interactions" value="227"/>
</dbReference>
<dbReference type="BioGRID" id="852511">
    <property type="interactions" value="1"/>
</dbReference>
<dbReference type="DIP" id="DIP-36037N"/>
<dbReference type="FunCoup" id="P0A7H0">
    <property type="interactions" value="269"/>
</dbReference>
<dbReference type="IntAct" id="P0A7H0">
    <property type="interactions" value="13"/>
</dbReference>
<dbReference type="STRING" id="511145.b3700"/>
<dbReference type="jPOST" id="P0A7H0"/>
<dbReference type="PaxDb" id="511145-b3700"/>
<dbReference type="EnsemblBacteria" id="AAC76723">
    <property type="protein sequence ID" value="AAC76723"/>
    <property type="gene ID" value="b3700"/>
</dbReference>
<dbReference type="GeneID" id="93778441"/>
<dbReference type="GeneID" id="948209"/>
<dbReference type="KEGG" id="ecj:JW3677"/>
<dbReference type="KEGG" id="eco:b3700"/>
<dbReference type="KEGG" id="ecoc:C3026_20060"/>
<dbReference type="PATRIC" id="fig|1411691.4.peg.3003"/>
<dbReference type="EchoBASE" id="EB0821"/>
<dbReference type="eggNOG" id="COG1195">
    <property type="taxonomic scope" value="Bacteria"/>
</dbReference>
<dbReference type="HOGENOM" id="CLU_040267_0_0_6"/>
<dbReference type="InParanoid" id="P0A7H0"/>
<dbReference type="OMA" id="GESWSYA"/>
<dbReference type="OrthoDB" id="9803889at2"/>
<dbReference type="PhylomeDB" id="P0A7H0"/>
<dbReference type="BioCyc" id="EcoCyc:EG10828-MONOMER"/>
<dbReference type="BioCyc" id="MetaCyc:EG10828-MONOMER"/>
<dbReference type="PRO" id="PR:P0A7H0"/>
<dbReference type="Proteomes" id="UP000000625">
    <property type="component" value="Chromosome"/>
</dbReference>
<dbReference type="GO" id="GO:0005737">
    <property type="term" value="C:cytoplasm"/>
    <property type="evidence" value="ECO:0007669"/>
    <property type="project" value="UniProtKB-SubCell"/>
</dbReference>
<dbReference type="GO" id="GO:0005524">
    <property type="term" value="F:ATP binding"/>
    <property type="evidence" value="ECO:0007669"/>
    <property type="project" value="UniProtKB-UniRule"/>
</dbReference>
<dbReference type="GO" id="GO:0003697">
    <property type="term" value="F:single-stranded DNA binding"/>
    <property type="evidence" value="ECO:0007669"/>
    <property type="project" value="UniProtKB-UniRule"/>
</dbReference>
<dbReference type="GO" id="GO:0006260">
    <property type="term" value="P:DNA replication"/>
    <property type="evidence" value="ECO:0007669"/>
    <property type="project" value="UniProtKB-UniRule"/>
</dbReference>
<dbReference type="GO" id="GO:0000731">
    <property type="term" value="P:DNA synthesis involved in DNA repair"/>
    <property type="evidence" value="ECO:0000315"/>
    <property type="project" value="EcoliWiki"/>
</dbReference>
<dbReference type="GO" id="GO:0006302">
    <property type="term" value="P:double-strand break repair"/>
    <property type="evidence" value="ECO:0000318"/>
    <property type="project" value="GO_Central"/>
</dbReference>
<dbReference type="GO" id="GO:0000725">
    <property type="term" value="P:recombinational repair"/>
    <property type="evidence" value="ECO:0000314"/>
    <property type="project" value="EcoCyc"/>
</dbReference>
<dbReference type="GO" id="GO:0009411">
    <property type="term" value="P:response to UV"/>
    <property type="evidence" value="ECO:0000315"/>
    <property type="project" value="EcoliWiki"/>
</dbReference>
<dbReference type="GO" id="GO:0009432">
    <property type="term" value="P:SOS response"/>
    <property type="evidence" value="ECO:0007669"/>
    <property type="project" value="UniProtKB-UniRule"/>
</dbReference>
<dbReference type="FunFam" id="1.20.1050.90:FF:000001">
    <property type="entry name" value="DNA replication and repair protein RecF"/>
    <property type="match status" value="1"/>
</dbReference>
<dbReference type="Gene3D" id="3.40.50.300">
    <property type="entry name" value="P-loop containing nucleotide triphosphate hydrolases"/>
    <property type="match status" value="1"/>
</dbReference>
<dbReference type="Gene3D" id="1.20.1050.90">
    <property type="entry name" value="RecF/RecN/SMC, N-terminal domain"/>
    <property type="match status" value="1"/>
</dbReference>
<dbReference type="HAMAP" id="MF_00365">
    <property type="entry name" value="RecF"/>
    <property type="match status" value="1"/>
</dbReference>
<dbReference type="InterPro" id="IPR001238">
    <property type="entry name" value="DNA-binding_RecF"/>
</dbReference>
<dbReference type="InterPro" id="IPR018078">
    <property type="entry name" value="DNA-binding_RecF_CS"/>
</dbReference>
<dbReference type="InterPro" id="IPR027417">
    <property type="entry name" value="P-loop_NTPase"/>
</dbReference>
<dbReference type="InterPro" id="IPR003395">
    <property type="entry name" value="RecF/RecN/SMC_N"/>
</dbReference>
<dbReference type="InterPro" id="IPR042174">
    <property type="entry name" value="RecF_2"/>
</dbReference>
<dbReference type="NCBIfam" id="TIGR00611">
    <property type="entry name" value="recf"/>
    <property type="match status" value="1"/>
</dbReference>
<dbReference type="PANTHER" id="PTHR32182">
    <property type="entry name" value="DNA REPLICATION AND REPAIR PROTEIN RECF"/>
    <property type="match status" value="1"/>
</dbReference>
<dbReference type="PANTHER" id="PTHR32182:SF0">
    <property type="entry name" value="DNA REPLICATION AND REPAIR PROTEIN RECF"/>
    <property type="match status" value="1"/>
</dbReference>
<dbReference type="Pfam" id="PF02463">
    <property type="entry name" value="SMC_N"/>
    <property type="match status" value="1"/>
</dbReference>
<dbReference type="SUPFAM" id="SSF52540">
    <property type="entry name" value="P-loop containing nucleoside triphosphate hydrolases"/>
    <property type="match status" value="1"/>
</dbReference>
<dbReference type="PROSITE" id="PS00617">
    <property type="entry name" value="RECF_1"/>
    <property type="match status" value="1"/>
</dbReference>
<dbReference type="PROSITE" id="PS00618">
    <property type="entry name" value="RECF_2"/>
    <property type="match status" value="1"/>
</dbReference>
<accession>P0A7H0</accession>
<accession>P03016</accession>
<accession>Q2M812</accession>
<comment type="function">
    <text>The RecF protein is involved in DNA metabolism; it is required for DNA replication and normal SOS inducibility. RecF binds preferentially to single-stranded, linear DNA. It also seems to bind ATP.</text>
</comment>
<comment type="interaction">
    <interactant intactId="EBI-556839">
        <id>P0A7H0</id>
    </interactant>
    <interactant intactId="EBI-543750">
        <id>P0A6F5</id>
        <label>groEL</label>
    </interactant>
    <organismsDiffer>false</organismsDiffer>
    <experiments>4</experiments>
</comment>
<comment type="subcellular location">
    <subcellularLocation>
        <location evidence="1">Cytoplasm</location>
    </subcellularLocation>
</comment>
<comment type="disruption phenotype">
    <text evidence="5">Fails to resume DNA synthesis after arrest of DNA replication (upon UV treatment); arrested replication forks accumulate.</text>
</comment>
<comment type="similarity">
    <text evidence="6">Belongs to the RecF family.</text>
</comment>
<protein>
    <recommendedName>
        <fullName>DNA replication and repair protein RecF</fullName>
    </recommendedName>
</protein>
<feature type="initiator methionine" description="Removed" evidence="4">
    <location>
        <position position="1"/>
    </location>
</feature>
<feature type="chain" id="PRO_0000196414" description="DNA replication and repair protein RecF">
    <location>
        <begin position="2"/>
        <end position="357"/>
    </location>
</feature>
<feature type="binding site" evidence="2">
    <location>
        <begin position="30"/>
        <end position="37"/>
    </location>
    <ligand>
        <name>ATP</name>
        <dbReference type="ChEBI" id="CHEBI:30616"/>
    </ligand>
</feature>
<feature type="mutagenesis site" description="Weakly active." evidence="3">
    <original>K</original>
    <variation>R</variation>
    <location>
        <position position="36"/>
    </location>
</feature>
<evidence type="ECO:0000250" key="1"/>
<evidence type="ECO:0000255" key="2"/>
<evidence type="ECO:0000269" key="3">
    <source>
    </source>
</evidence>
<evidence type="ECO:0000269" key="4">
    <source>
    </source>
</evidence>
<evidence type="ECO:0000269" key="5">
    <source>
    </source>
</evidence>
<evidence type="ECO:0000305" key="6"/>